<protein>
    <recommendedName>
        <fullName evidence="1">Ribonuclease HII</fullName>
        <shortName evidence="1">RNase HII</shortName>
        <ecNumber evidence="1">3.1.26.4</ecNumber>
    </recommendedName>
</protein>
<keyword id="KW-0963">Cytoplasm</keyword>
<keyword id="KW-0255">Endonuclease</keyword>
<keyword id="KW-0378">Hydrolase</keyword>
<keyword id="KW-0464">Manganese</keyword>
<keyword id="KW-0479">Metal-binding</keyword>
<keyword id="KW-0540">Nuclease</keyword>
<proteinExistence type="inferred from homology"/>
<name>RNH2_STAA1</name>
<organism>
    <name type="scientific">Staphylococcus aureus (strain Mu3 / ATCC 700698)</name>
    <dbReference type="NCBI Taxonomy" id="418127"/>
    <lineage>
        <taxon>Bacteria</taxon>
        <taxon>Bacillati</taxon>
        <taxon>Bacillota</taxon>
        <taxon>Bacilli</taxon>
        <taxon>Bacillales</taxon>
        <taxon>Staphylococcaceae</taxon>
        <taxon>Staphylococcus</taxon>
    </lineage>
</organism>
<evidence type="ECO:0000255" key="1">
    <source>
        <dbReference type="HAMAP-Rule" id="MF_00052"/>
    </source>
</evidence>
<evidence type="ECO:0000255" key="2">
    <source>
        <dbReference type="PROSITE-ProRule" id="PRU01319"/>
    </source>
</evidence>
<gene>
    <name evidence="1" type="primary">rnhB</name>
    <name type="ordered locus">SAHV_1234</name>
</gene>
<sequence>MTLTIKEVTQLINAVNTIEELENHECFLDERKGVQNAIARRRKALEKEQALKEKYVEMTYFENEILKEHPNAIICGIDEVGRGPLAGPVVACATILNSNHNYLGLDDSKKVPITKRLELNEALKNEVTAFAYGIATAEEIDEFNIYKATQIAMQRAIDGLSVQPTHLLIDAMTLDNALPQVSLIKGDARSVSIAAASIMAKVFRDDYMTQLSKDYPEYGFEKNAGYGTKQHLLAIDDIGIMKEHRKSFEPIKSLL</sequence>
<reference key="1">
    <citation type="journal article" date="2008" name="Antimicrob. Agents Chemother.">
        <title>Mutated response regulator graR is responsible for phenotypic conversion of Staphylococcus aureus from heterogeneous vancomycin-intermediate resistance to vancomycin-intermediate resistance.</title>
        <authorList>
            <person name="Neoh H.-M."/>
            <person name="Cui L."/>
            <person name="Yuzawa H."/>
            <person name="Takeuchi F."/>
            <person name="Matsuo M."/>
            <person name="Hiramatsu K."/>
        </authorList>
    </citation>
    <scope>NUCLEOTIDE SEQUENCE [LARGE SCALE GENOMIC DNA]</scope>
    <source>
        <strain>Mu3 / ATCC 700698</strain>
    </source>
</reference>
<dbReference type="EC" id="3.1.26.4" evidence="1"/>
<dbReference type="EMBL" id="AP009324">
    <property type="protein sequence ID" value="BAF78117.1"/>
    <property type="molecule type" value="Genomic_DNA"/>
</dbReference>
<dbReference type="RefSeq" id="WP_000176393.1">
    <property type="nucleotide sequence ID" value="NC_009782.1"/>
</dbReference>
<dbReference type="SMR" id="A7X1L7"/>
<dbReference type="KEGG" id="saw:SAHV_1234"/>
<dbReference type="HOGENOM" id="CLU_036532_2_1_9"/>
<dbReference type="GO" id="GO:0005737">
    <property type="term" value="C:cytoplasm"/>
    <property type="evidence" value="ECO:0007669"/>
    <property type="project" value="UniProtKB-SubCell"/>
</dbReference>
<dbReference type="GO" id="GO:0032299">
    <property type="term" value="C:ribonuclease H2 complex"/>
    <property type="evidence" value="ECO:0007669"/>
    <property type="project" value="TreeGrafter"/>
</dbReference>
<dbReference type="GO" id="GO:0030145">
    <property type="term" value="F:manganese ion binding"/>
    <property type="evidence" value="ECO:0007669"/>
    <property type="project" value="UniProtKB-UniRule"/>
</dbReference>
<dbReference type="GO" id="GO:0003723">
    <property type="term" value="F:RNA binding"/>
    <property type="evidence" value="ECO:0007669"/>
    <property type="project" value="InterPro"/>
</dbReference>
<dbReference type="GO" id="GO:0004523">
    <property type="term" value="F:RNA-DNA hybrid ribonuclease activity"/>
    <property type="evidence" value="ECO:0007669"/>
    <property type="project" value="UniProtKB-UniRule"/>
</dbReference>
<dbReference type="GO" id="GO:0043137">
    <property type="term" value="P:DNA replication, removal of RNA primer"/>
    <property type="evidence" value="ECO:0007669"/>
    <property type="project" value="TreeGrafter"/>
</dbReference>
<dbReference type="GO" id="GO:0006298">
    <property type="term" value="P:mismatch repair"/>
    <property type="evidence" value="ECO:0007669"/>
    <property type="project" value="TreeGrafter"/>
</dbReference>
<dbReference type="CDD" id="cd07182">
    <property type="entry name" value="RNase_HII_bacteria_HII_like"/>
    <property type="match status" value="1"/>
</dbReference>
<dbReference type="FunFam" id="3.30.420.10:FF:000006">
    <property type="entry name" value="Ribonuclease HII"/>
    <property type="match status" value="1"/>
</dbReference>
<dbReference type="Gene3D" id="3.30.420.10">
    <property type="entry name" value="Ribonuclease H-like superfamily/Ribonuclease H"/>
    <property type="match status" value="1"/>
</dbReference>
<dbReference type="HAMAP" id="MF_00052_B">
    <property type="entry name" value="RNase_HII_B"/>
    <property type="match status" value="1"/>
</dbReference>
<dbReference type="InterPro" id="IPR022898">
    <property type="entry name" value="RNase_HII"/>
</dbReference>
<dbReference type="InterPro" id="IPR001352">
    <property type="entry name" value="RNase_HII/HIII"/>
</dbReference>
<dbReference type="InterPro" id="IPR024567">
    <property type="entry name" value="RNase_HII/HIII_dom"/>
</dbReference>
<dbReference type="InterPro" id="IPR012337">
    <property type="entry name" value="RNaseH-like_sf"/>
</dbReference>
<dbReference type="InterPro" id="IPR036397">
    <property type="entry name" value="RNaseH_sf"/>
</dbReference>
<dbReference type="NCBIfam" id="NF000594">
    <property type="entry name" value="PRK00015.1-1"/>
    <property type="match status" value="1"/>
</dbReference>
<dbReference type="NCBIfam" id="NF000595">
    <property type="entry name" value="PRK00015.1-3"/>
    <property type="match status" value="1"/>
</dbReference>
<dbReference type="PANTHER" id="PTHR10954">
    <property type="entry name" value="RIBONUCLEASE H2 SUBUNIT A"/>
    <property type="match status" value="1"/>
</dbReference>
<dbReference type="PANTHER" id="PTHR10954:SF18">
    <property type="entry name" value="RIBONUCLEASE HII"/>
    <property type="match status" value="1"/>
</dbReference>
<dbReference type="Pfam" id="PF01351">
    <property type="entry name" value="RNase_HII"/>
    <property type="match status" value="1"/>
</dbReference>
<dbReference type="SUPFAM" id="SSF53098">
    <property type="entry name" value="Ribonuclease H-like"/>
    <property type="match status" value="1"/>
</dbReference>
<dbReference type="PROSITE" id="PS51975">
    <property type="entry name" value="RNASE_H_2"/>
    <property type="match status" value="1"/>
</dbReference>
<feature type="chain" id="PRO_1000031208" description="Ribonuclease HII">
    <location>
        <begin position="1"/>
        <end position="255"/>
    </location>
</feature>
<feature type="domain" description="RNase H type-2" evidence="2">
    <location>
        <begin position="72"/>
        <end position="255"/>
    </location>
</feature>
<feature type="binding site" evidence="1">
    <location>
        <position position="78"/>
    </location>
    <ligand>
        <name>a divalent metal cation</name>
        <dbReference type="ChEBI" id="CHEBI:60240"/>
    </ligand>
</feature>
<feature type="binding site" evidence="1">
    <location>
        <position position="79"/>
    </location>
    <ligand>
        <name>a divalent metal cation</name>
        <dbReference type="ChEBI" id="CHEBI:60240"/>
    </ligand>
</feature>
<feature type="binding site" evidence="1">
    <location>
        <position position="170"/>
    </location>
    <ligand>
        <name>a divalent metal cation</name>
        <dbReference type="ChEBI" id="CHEBI:60240"/>
    </ligand>
</feature>
<accession>A7X1L7</accession>
<comment type="function">
    <text evidence="1">Endonuclease that specifically degrades the RNA of RNA-DNA hybrids.</text>
</comment>
<comment type="catalytic activity">
    <reaction evidence="1">
        <text>Endonucleolytic cleavage to 5'-phosphomonoester.</text>
        <dbReference type="EC" id="3.1.26.4"/>
    </reaction>
</comment>
<comment type="cofactor">
    <cofactor evidence="1">
        <name>Mn(2+)</name>
        <dbReference type="ChEBI" id="CHEBI:29035"/>
    </cofactor>
    <cofactor evidence="1">
        <name>Mg(2+)</name>
        <dbReference type="ChEBI" id="CHEBI:18420"/>
    </cofactor>
    <text evidence="1">Manganese or magnesium. Binds 1 divalent metal ion per monomer in the absence of substrate. May bind a second metal ion after substrate binding.</text>
</comment>
<comment type="subcellular location">
    <subcellularLocation>
        <location evidence="1">Cytoplasm</location>
    </subcellularLocation>
</comment>
<comment type="similarity">
    <text evidence="1">Belongs to the RNase HII family.</text>
</comment>